<comment type="function">
    <text evidence="1">Negatively regulates superinfection and syncytium formation in infected host cells. Acts in concert with OPG185/A56 protein at the host cell membrane by interacting with and inhibiting the mature virion entry/fusion complex (EFC). This mechanism ensures that new virions released from the cell cannot enter already infected cells.</text>
</comment>
<comment type="subunit">
    <text evidence="1">Interacts with OPG185/A56 protein.</text>
</comment>
<comment type="subcellular location">
    <subcellularLocation>
        <location evidence="1">Virion membrane</location>
        <topology evidence="1">Peripheral membrane protein</topology>
    </subcellularLocation>
    <subcellularLocation>
        <location evidence="1">Host cell membrane</location>
        <topology evidence="1">Peripheral membrane protein</topology>
        <orientation evidence="1">Extracellular side</orientation>
    </subcellularLocation>
    <text evidence="1">Component of extracellular enveloped virus (EEV) but not intracellular mature virus (IMV). Anchored to the surface of the outermost membrane of EEV via its interaction with A56 protein.</text>
</comment>
<comment type="induction">
    <text evidence="1">Expressed in the intermediate phase of the viral replicative cycle.</text>
</comment>
<comment type="similarity">
    <text evidence="3">Belongs to the serpin family. Orthopoxvirus OPG040 subfamily.</text>
</comment>
<keyword id="KW-1032">Host cell membrane</keyword>
<keyword id="KW-1043">Host membrane</keyword>
<keyword id="KW-0378">Hydrolase</keyword>
<keyword id="KW-0472">Membrane</keyword>
<keyword id="KW-0645">Protease</keyword>
<keyword id="KW-1185">Reference proteome</keyword>
<keyword id="KW-0732">Signal</keyword>
<keyword id="KW-0946">Virion</keyword>
<evidence type="ECO:0000250" key="1">
    <source>
        <dbReference type="UniProtKB" id="P18384"/>
    </source>
</evidence>
<evidence type="ECO:0000255" key="2"/>
<evidence type="ECO:0000305" key="3"/>
<evidence type="ECO:0000312" key="4">
    <source>
        <dbReference type="EMBL" id="QNP12896.1"/>
    </source>
</evidence>
<evidence type="ECO:0000312" key="5">
    <source>
        <dbReference type="Proteomes" id="UP000516359"/>
    </source>
</evidence>
<name>PG040_MONPV</name>
<reference key="1">
    <citation type="journal article" date="2022" name="J. Infect. Dis.">
        <title>Exportation of Monkeypox virus from the African continent.</title>
        <authorList>
            <person name="Mauldin M.R."/>
            <person name="McCollum A.M."/>
            <person name="Nakazawa Y.J."/>
            <person name="Mandra A."/>
            <person name="Whitehouse E.R."/>
            <person name="Davidson W."/>
            <person name="Zhao H."/>
            <person name="Gao J."/>
            <person name="Li Y."/>
            <person name="Doty J."/>
            <person name="Yinka-Ogunleye A."/>
            <person name="Akinpelu A."/>
            <person name="Aruna O."/>
            <person name="Naidoo D."/>
            <person name="Lewandowski K."/>
            <person name="Afrough B."/>
            <person name="Graham V."/>
            <person name="Aarons E."/>
            <person name="Hewson R."/>
            <person name="Vipond R."/>
            <person name="Dunning J."/>
            <person name="Chand M."/>
            <person name="Brown C."/>
            <person name="Cohen-Gihon I."/>
            <person name="Erez N."/>
            <person name="Shifman O."/>
            <person name="Israeli O."/>
            <person name="Sharon M."/>
            <person name="Schwartz E."/>
            <person name="Beth-Din A."/>
            <person name="Zvi A."/>
            <person name="Mak T.M."/>
            <person name="Ng Y.K."/>
            <person name="Cui L."/>
            <person name="Lin R.T.P."/>
            <person name="Olson V.A."/>
            <person name="Brooks T."/>
            <person name="Paran N."/>
            <person name="Ihekweazu C."/>
            <person name="Reynolds M.G."/>
        </authorList>
    </citation>
    <scope>NUCLEOTIDE SEQUENCE [LARGE SCALE GENOMIC DNA]</scope>
    <source>
        <strain>MPXV-M5312_HM12_Rivers</strain>
    </source>
</reference>
<feature type="signal peptide" evidence="2">
    <location>
        <begin position="1"/>
        <end position="15"/>
    </location>
</feature>
<feature type="chain" id="PRO_0000457203" description="Superinfection exclusion protein" evidence="1">
    <location>
        <begin position="16"/>
        <end position="375"/>
    </location>
</feature>
<gene>
    <name type="primary">OPG040</name>
    <name type="synonym">SERP2</name>
    <name type="ORF">MPXVgp028</name>
</gene>
<organismHost>
    <name type="scientific">Cynomys gunnisoni</name>
    <name type="common">Gunnison's prairie dog</name>
    <name type="synonym">Spermophilus gunnisoni</name>
    <dbReference type="NCBI Taxonomy" id="45479"/>
</organismHost>
<organismHost>
    <name type="scientific">Cynomys leucurus</name>
    <name type="common">White-tailed prairie dog</name>
    <dbReference type="NCBI Taxonomy" id="99825"/>
</organismHost>
<organismHost>
    <name type="scientific">Cynomys ludovicianus</name>
    <name type="common">Black-tailed prairie dog</name>
    <dbReference type="NCBI Taxonomy" id="45480"/>
</organismHost>
<organismHost>
    <name type="scientific">Cynomys mexicanus</name>
    <name type="common">Mexican prairie dog</name>
    <dbReference type="NCBI Taxonomy" id="99826"/>
</organismHost>
<organismHost>
    <name type="scientific">Cynomys parvidens</name>
    <name type="common">Utah prairie dog</name>
    <dbReference type="NCBI Taxonomy" id="99827"/>
</organismHost>
<organismHost>
    <name type="scientific">Gliridae</name>
    <name type="common">dormice</name>
    <dbReference type="NCBI Taxonomy" id="30650"/>
</organismHost>
<organismHost>
    <name type="scientific">Heliosciurus ruwenzorii</name>
    <name type="common">Ruwenzori sun squirrel</name>
    <dbReference type="NCBI Taxonomy" id="226685"/>
</organismHost>
<organismHost>
    <name type="scientific">Homo sapiens</name>
    <name type="common">Human</name>
    <dbReference type="NCBI Taxonomy" id="9606"/>
</organismHost>
<organismHost>
    <name type="scientific">Mus musculus</name>
    <name type="common">Mouse</name>
    <dbReference type="NCBI Taxonomy" id="10090"/>
</organismHost>
<organism evidence="4 5">
    <name type="scientific">Monkeypox virus</name>
    <dbReference type="NCBI Taxonomy" id="10244"/>
    <lineage>
        <taxon>Viruses</taxon>
        <taxon>Varidnaviria</taxon>
        <taxon>Bamfordvirae</taxon>
        <taxon>Nucleocytoviricota</taxon>
        <taxon>Pokkesviricetes</taxon>
        <taxon>Chitovirales</taxon>
        <taxon>Poxviridae</taxon>
        <taxon>Chordopoxvirinae</taxon>
        <taxon>Orthopoxvirus</taxon>
    </lineage>
</organism>
<sequence length="375" mass="42984">MIALLILSLACSVSAYRLQGFINAGILAYKNIQNGDEDDNDNIVFSPFGYSFSMFMSLLSASGNTRVELLNTMNLRKRDLGPAFTELISGLAKMKTSKYTYTDLTYQSFVDSTVCIKPSYYQQYHRFGLYRLNFRRDAVNKINSIVERRSGMSNVVDSTMLDDNTLWAIINTIYFKGTWQYPFDITKTHNASFTNKYGTKTVPMMNVVTKLQGNTITIDDEEYDMVRLLYKDANISMYLAIGDNMTHFTDSITPAKLEYWSSQLGNKMYNLKLPRFSIENKRDIKSIAEMMAPSMFNPDKASFKHMTRDPLYIYKMFQNVKIDVDEQGTVAEASTIMVATARSSPEELEFNTPFVFIIRHDITGFILFMGKVEYT</sequence>
<dbReference type="EMBL" id="MT903340">
    <property type="protein sequence ID" value="QNP12896.1"/>
    <property type="molecule type" value="Genomic_DNA"/>
</dbReference>
<dbReference type="RefSeq" id="YP_010377023.1">
    <property type="nucleotide sequence ID" value="NC_063383.1"/>
</dbReference>
<dbReference type="SMR" id="A0A7H0DN13"/>
<dbReference type="GeneID" id="72551437"/>
<dbReference type="Proteomes" id="UP000516359">
    <property type="component" value="Genome"/>
</dbReference>
<dbReference type="GO" id="GO:0005615">
    <property type="term" value="C:extracellular space"/>
    <property type="evidence" value="ECO:0007669"/>
    <property type="project" value="InterPro"/>
</dbReference>
<dbReference type="GO" id="GO:0020002">
    <property type="term" value="C:host cell plasma membrane"/>
    <property type="evidence" value="ECO:0007669"/>
    <property type="project" value="UniProtKB-SubCell"/>
</dbReference>
<dbReference type="GO" id="GO:0016020">
    <property type="term" value="C:membrane"/>
    <property type="evidence" value="ECO:0007669"/>
    <property type="project" value="UniProtKB-KW"/>
</dbReference>
<dbReference type="GO" id="GO:0055036">
    <property type="term" value="C:virion membrane"/>
    <property type="evidence" value="ECO:0007669"/>
    <property type="project" value="UniProtKB-SubCell"/>
</dbReference>
<dbReference type="GO" id="GO:0008233">
    <property type="term" value="F:peptidase activity"/>
    <property type="evidence" value="ECO:0007669"/>
    <property type="project" value="UniProtKB-KW"/>
</dbReference>
<dbReference type="GO" id="GO:0004867">
    <property type="term" value="F:serine-type endopeptidase inhibitor activity"/>
    <property type="evidence" value="ECO:0007669"/>
    <property type="project" value="InterPro"/>
</dbReference>
<dbReference type="GO" id="GO:0010757">
    <property type="term" value="P:negative regulation of plasminogen activation"/>
    <property type="evidence" value="ECO:0007669"/>
    <property type="project" value="TreeGrafter"/>
</dbReference>
<dbReference type="GO" id="GO:0061044">
    <property type="term" value="P:negative regulation of vascular wound healing"/>
    <property type="evidence" value="ECO:0007669"/>
    <property type="project" value="TreeGrafter"/>
</dbReference>
<dbReference type="GO" id="GO:0006508">
    <property type="term" value="P:proteolysis"/>
    <property type="evidence" value="ECO:0007669"/>
    <property type="project" value="UniProtKB-KW"/>
</dbReference>
<dbReference type="Gene3D" id="2.30.39.10">
    <property type="entry name" value="Alpha-1-antitrypsin, domain 1"/>
    <property type="match status" value="1"/>
</dbReference>
<dbReference type="Gene3D" id="3.30.497.10">
    <property type="entry name" value="Antithrombin, subunit I, domain 2"/>
    <property type="match status" value="1"/>
</dbReference>
<dbReference type="InterPro" id="IPR023796">
    <property type="entry name" value="Serpin_dom"/>
</dbReference>
<dbReference type="InterPro" id="IPR000215">
    <property type="entry name" value="Serpin_fam"/>
</dbReference>
<dbReference type="InterPro" id="IPR036186">
    <property type="entry name" value="Serpin_sf"/>
</dbReference>
<dbReference type="InterPro" id="IPR042178">
    <property type="entry name" value="Serpin_sf_1"/>
</dbReference>
<dbReference type="InterPro" id="IPR042185">
    <property type="entry name" value="Serpin_sf_2"/>
</dbReference>
<dbReference type="PANTHER" id="PTHR11461:SF49">
    <property type="entry name" value="PLASMINOGEN ACTIVATOR INHIBITOR 1"/>
    <property type="match status" value="1"/>
</dbReference>
<dbReference type="PANTHER" id="PTHR11461">
    <property type="entry name" value="SERINE PROTEASE INHIBITOR, SERPIN"/>
    <property type="match status" value="1"/>
</dbReference>
<dbReference type="Pfam" id="PF00079">
    <property type="entry name" value="Serpin"/>
    <property type="match status" value="1"/>
</dbReference>
<dbReference type="SMART" id="SM00093">
    <property type="entry name" value="SERPIN"/>
    <property type="match status" value="1"/>
</dbReference>
<dbReference type="SUPFAM" id="SSF56574">
    <property type="entry name" value="Serpins"/>
    <property type="match status" value="1"/>
</dbReference>
<accession>A0A7H0DN13</accession>
<proteinExistence type="inferred from homology"/>
<protein>
    <recommendedName>
        <fullName>Superinfection exclusion protein</fullName>
    </recommendedName>
</protein>